<dbReference type="EC" id="6.3.5.2" evidence="1"/>
<dbReference type="EMBL" id="CP000095">
    <property type="protein sequence ID" value="AAZ58852.1"/>
    <property type="molecule type" value="Genomic_DNA"/>
</dbReference>
<dbReference type="RefSeq" id="WP_011293996.1">
    <property type="nucleotide sequence ID" value="NC_007335.2"/>
</dbReference>
<dbReference type="SMR" id="Q46I26"/>
<dbReference type="STRING" id="59920.PMN2A_1363"/>
<dbReference type="MEROPS" id="C26.957"/>
<dbReference type="KEGG" id="pmn:PMN2A_1363"/>
<dbReference type="HOGENOM" id="CLU_014340_0_5_3"/>
<dbReference type="OrthoDB" id="9802219at2"/>
<dbReference type="PhylomeDB" id="Q46I26"/>
<dbReference type="UniPathway" id="UPA00189">
    <property type="reaction ID" value="UER00296"/>
</dbReference>
<dbReference type="Proteomes" id="UP000002535">
    <property type="component" value="Chromosome"/>
</dbReference>
<dbReference type="GO" id="GO:0005829">
    <property type="term" value="C:cytosol"/>
    <property type="evidence" value="ECO:0007669"/>
    <property type="project" value="TreeGrafter"/>
</dbReference>
<dbReference type="GO" id="GO:0005524">
    <property type="term" value="F:ATP binding"/>
    <property type="evidence" value="ECO:0007669"/>
    <property type="project" value="UniProtKB-UniRule"/>
</dbReference>
<dbReference type="GO" id="GO:0003921">
    <property type="term" value="F:GMP synthase activity"/>
    <property type="evidence" value="ECO:0007669"/>
    <property type="project" value="InterPro"/>
</dbReference>
<dbReference type="CDD" id="cd01742">
    <property type="entry name" value="GATase1_GMP_Synthase"/>
    <property type="match status" value="1"/>
</dbReference>
<dbReference type="CDD" id="cd01997">
    <property type="entry name" value="GMP_synthase_C"/>
    <property type="match status" value="1"/>
</dbReference>
<dbReference type="FunFam" id="3.30.300.10:FF:000002">
    <property type="entry name" value="GMP synthase [glutamine-hydrolyzing]"/>
    <property type="match status" value="1"/>
</dbReference>
<dbReference type="FunFam" id="3.40.50.620:FF:000001">
    <property type="entry name" value="GMP synthase [glutamine-hydrolyzing]"/>
    <property type="match status" value="1"/>
</dbReference>
<dbReference type="FunFam" id="3.40.50.880:FF:000001">
    <property type="entry name" value="GMP synthase [glutamine-hydrolyzing]"/>
    <property type="match status" value="1"/>
</dbReference>
<dbReference type="Gene3D" id="3.30.300.10">
    <property type="match status" value="1"/>
</dbReference>
<dbReference type="Gene3D" id="3.40.50.880">
    <property type="match status" value="1"/>
</dbReference>
<dbReference type="Gene3D" id="3.40.50.620">
    <property type="entry name" value="HUPs"/>
    <property type="match status" value="1"/>
</dbReference>
<dbReference type="HAMAP" id="MF_00344">
    <property type="entry name" value="GMP_synthase"/>
    <property type="match status" value="1"/>
</dbReference>
<dbReference type="InterPro" id="IPR029062">
    <property type="entry name" value="Class_I_gatase-like"/>
</dbReference>
<dbReference type="InterPro" id="IPR017926">
    <property type="entry name" value="GATASE"/>
</dbReference>
<dbReference type="InterPro" id="IPR001674">
    <property type="entry name" value="GMP_synth_C"/>
</dbReference>
<dbReference type="InterPro" id="IPR004739">
    <property type="entry name" value="GMP_synth_GATase"/>
</dbReference>
<dbReference type="InterPro" id="IPR022955">
    <property type="entry name" value="GMP_synthase"/>
</dbReference>
<dbReference type="InterPro" id="IPR025777">
    <property type="entry name" value="GMPS_ATP_PPase_dom"/>
</dbReference>
<dbReference type="InterPro" id="IPR022310">
    <property type="entry name" value="NAD/GMP_synthase"/>
</dbReference>
<dbReference type="InterPro" id="IPR014729">
    <property type="entry name" value="Rossmann-like_a/b/a_fold"/>
</dbReference>
<dbReference type="NCBIfam" id="TIGR00884">
    <property type="entry name" value="guaA_Cterm"/>
    <property type="match status" value="1"/>
</dbReference>
<dbReference type="NCBIfam" id="TIGR00888">
    <property type="entry name" value="guaA_Nterm"/>
    <property type="match status" value="1"/>
</dbReference>
<dbReference type="NCBIfam" id="NF000848">
    <property type="entry name" value="PRK00074.1"/>
    <property type="match status" value="1"/>
</dbReference>
<dbReference type="PANTHER" id="PTHR11922:SF2">
    <property type="entry name" value="GMP SYNTHASE [GLUTAMINE-HYDROLYZING]"/>
    <property type="match status" value="1"/>
</dbReference>
<dbReference type="PANTHER" id="PTHR11922">
    <property type="entry name" value="GMP SYNTHASE-RELATED"/>
    <property type="match status" value="1"/>
</dbReference>
<dbReference type="Pfam" id="PF00117">
    <property type="entry name" value="GATase"/>
    <property type="match status" value="1"/>
</dbReference>
<dbReference type="Pfam" id="PF00958">
    <property type="entry name" value="GMP_synt_C"/>
    <property type="match status" value="1"/>
</dbReference>
<dbReference type="Pfam" id="PF02540">
    <property type="entry name" value="NAD_synthase"/>
    <property type="match status" value="1"/>
</dbReference>
<dbReference type="PRINTS" id="PR00097">
    <property type="entry name" value="ANTSNTHASEII"/>
</dbReference>
<dbReference type="PRINTS" id="PR00099">
    <property type="entry name" value="CPSGATASE"/>
</dbReference>
<dbReference type="PRINTS" id="PR00096">
    <property type="entry name" value="GATASE"/>
</dbReference>
<dbReference type="SUPFAM" id="SSF52402">
    <property type="entry name" value="Adenine nucleotide alpha hydrolases-like"/>
    <property type="match status" value="1"/>
</dbReference>
<dbReference type="SUPFAM" id="SSF52317">
    <property type="entry name" value="Class I glutamine amidotransferase-like"/>
    <property type="match status" value="1"/>
</dbReference>
<dbReference type="SUPFAM" id="SSF54810">
    <property type="entry name" value="GMP synthetase C-terminal dimerisation domain"/>
    <property type="match status" value="1"/>
</dbReference>
<dbReference type="PROSITE" id="PS51273">
    <property type="entry name" value="GATASE_TYPE_1"/>
    <property type="match status" value="1"/>
</dbReference>
<dbReference type="PROSITE" id="PS51553">
    <property type="entry name" value="GMPS_ATP_PPASE"/>
    <property type="match status" value="1"/>
</dbReference>
<gene>
    <name evidence="1" type="primary">guaA</name>
    <name type="ordered locus">PMN2A_1363</name>
</gene>
<protein>
    <recommendedName>
        <fullName evidence="1">GMP synthase [glutamine-hydrolyzing]</fullName>
        <ecNumber evidence="1">6.3.5.2</ecNumber>
    </recommendedName>
    <alternativeName>
        <fullName evidence="1">GMP synthetase</fullName>
    </alternativeName>
    <alternativeName>
        <fullName evidence="1">Glutamine amidotransferase</fullName>
    </alternativeName>
</protein>
<sequence>MASMISAEKRNPAIVILDFGSQYSELIARRIRETEVYSLVMSYTTSADQLRSLKPKGIILSGGPGSVYEEGAPYCDPEIFNLGIPVLGVCYGMQLMVHELGGSVKPAAGKAEYGKAPLEVDDPTALLTNVISGSTMWMSHGDSVQKLPKGFVRLAHTSNTLEAAIALHDKSFYGVQFHPEVVHSTHGMVVIRNFVYDICSCEPDWTTNLFIDEAVSQVQQHVGDKKVLLALSGGVDSSTLAFLLNKAIGPQLTCMFIDQGFMRKGEPEFLMSFFDEKFKINVEYINARERFISQLKGVTDPEQKRKIIGREFIRVFEEESLRLGPFDYLAQGTLYPDVIESSGTNIDPKTGERIAVKIKSHHNVGGLPKDLQFKLVEPLRRLFKDEVRKVGKSLGLPDEIVRRHPFPGPGLAIRILGEVTHEKLNCLRDADLIVREEINNAGLYNKIWQAFAVLLPVYSVGVMGDQRTYAWPIVVRCVSSEDGMTADWSRLPYAVLEKISNRIVNEVEGVNRVVLDITSKPPGTIEWE</sequence>
<name>GUAA_PROMT</name>
<reference key="1">
    <citation type="journal article" date="2007" name="PLoS Genet.">
        <title>Patterns and implications of gene gain and loss in the evolution of Prochlorococcus.</title>
        <authorList>
            <person name="Kettler G.C."/>
            <person name="Martiny A.C."/>
            <person name="Huang K."/>
            <person name="Zucker J."/>
            <person name="Coleman M.L."/>
            <person name="Rodrigue S."/>
            <person name="Chen F."/>
            <person name="Lapidus A."/>
            <person name="Ferriera S."/>
            <person name="Johnson J."/>
            <person name="Steglich C."/>
            <person name="Church G.M."/>
            <person name="Richardson P."/>
            <person name="Chisholm S.W."/>
        </authorList>
    </citation>
    <scope>NUCLEOTIDE SEQUENCE [LARGE SCALE GENOMIC DNA]</scope>
    <source>
        <strain>NATL2A</strain>
    </source>
</reference>
<accession>Q46I26</accession>
<evidence type="ECO:0000255" key="1">
    <source>
        <dbReference type="HAMAP-Rule" id="MF_00344"/>
    </source>
</evidence>
<organism>
    <name type="scientific">Prochlorococcus marinus (strain NATL2A)</name>
    <dbReference type="NCBI Taxonomy" id="59920"/>
    <lineage>
        <taxon>Bacteria</taxon>
        <taxon>Bacillati</taxon>
        <taxon>Cyanobacteriota</taxon>
        <taxon>Cyanophyceae</taxon>
        <taxon>Synechococcales</taxon>
        <taxon>Prochlorococcaceae</taxon>
        <taxon>Prochlorococcus</taxon>
    </lineage>
</organism>
<keyword id="KW-0067">ATP-binding</keyword>
<keyword id="KW-0315">Glutamine amidotransferase</keyword>
<keyword id="KW-0332">GMP biosynthesis</keyword>
<keyword id="KW-0436">Ligase</keyword>
<keyword id="KW-0547">Nucleotide-binding</keyword>
<keyword id="KW-0658">Purine biosynthesis</keyword>
<keyword id="KW-1185">Reference proteome</keyword>
<comment type="function">
    <text evidence="1">Catalyzes the synthesis of GMP from XMP.</text>
</comment>
<comment type="catalytic activity">
    <reaction evidence="1">
        <text>XMP + L-glutamine + ATP + H2O = GMP + L-glutamate + AMP + diphosphate + 2 H(+)</text>
        <dbReference type="Rhea" id="RHEA:11680"/>
        <dbReference type="ChEBI" id="CHEBI:15377"/>
        <dbReference type="ChEBI" id="CHEBI:15378"/>
        <dbReference type="ChEBI" id="CHEBI:29985"/>
        <dbReference type="ChEBI" id="CHEBI:30616"/>
        <dbReference type="ChEBI" id="CHEBI:33019"/>
        <dbReference type="ChEBI" id="CHEBI:57464"/>
        <dbReference type="ChEBI" id="CHEBI:58115"/>
        <dbReference type="ChEBI" id="CHEBI:58359"/>
        <dbReference type="ChEBI" id="CHEBI:456215"/>
        <dbReference type="EC" id="6.3.5.2"/>
    </reaction>
</comment>
<comment type="pathway">
    <text evidence="1">Purine metabolism; GMP biosynthesis; GMP from XMP (L-Gln route): step 1/1.</text>
</comment>
<comment type="subunit">
    <text evidence="1">Homodimer.</text>
</comment>
<proteinExistence type="inferred from homology"/>
<feature type="chain" id="PRO_0000229454" description="GMP synthase [glutamine-hydrolyzing]">
    <location>
        <begin position="1"/>
        <end position="528"/>
    </location>
</feature>
<feature type="domain" description="Glutamine amidotransferase type-1" evidence="1">
    <location>
        <begin position="13"/>
        <end position="204"/>
    </location>
</feature>
<feature type="domain" description="GMPS ATP-PPase" evidence="1">
    <location>
        <begin position="205"/>
        <end position="403"/>
    </location>
</feature>
<feature type="active site" description="Nucleophile" evidence="1">
    <location>
        <position position="90"/>
    </location>
</feature>
<feature type="active site" evidence="1">
    <location>
        <position position="178"/>
    </location>
</feature>
<feature type="active site" evidence="1">
    <location>
        <position position="180"/>
    </location>
</feature>
<feature type="binding site" evidence="1">
    <location>
        <begin position="232"/>
        <end position="238"/>
    </location>
    <ligand>
        <name>ATP</name>
        <dbReference type="ChEBI" id="CHEBI:30616"/>
    </ligand>
</feature>